<name>MNMG_STRP1</name>
<accession>Q99XI8</accession>
<accession>Q48W19</accession>
<comment type="function">
    <text evidence="1">NAD-binding protein involved in the addition of a carboxymethylaminomethyl (cmnm) group at the wobble position (U34) of certain tRNAs, forming tRNA-cmnm(5)s(2)U34.</text>
</comment>
<comment type="cofactor">
    <cofactor evidence="1">
        <name>FAD</name>
        <dbReference type="ChEBI" id="CHEBI:57692"/>
    </cofactor>
</comment>
<comment type="subunit">
    <text evidence="1">Homodimer. Heterotetramer of two MnmE and two MnmG subunits.</text>
</comment>
<comment type="subcellular location">
    <subcellularLocation>
        <location evidence="1">Cytoplasm</location>
    </subcellularLocation>
</comment>
<comment type="similarity">
    <text evidence="1">Belongs to the MnmG family.</text>
</comment>
<gene>
    <name evidence="1" type="primary">mnmG</name>
    <name evidence="1" type="synonym">gidA</name>
    <name type="ordered locus">SPy_2185</name>
    <name type="ordered locus">M5005_Spy1838</name>
</gene>
<evidence type="ECO:0000255" key="1">
    <source>
        <dbReference type="HAMAP-Rule" id="MF_00129"/>
    </source>
</evidence>
<proteinExistence type="inferred from homology"/>
<sequence>MTHEFTESYDVIVIGAGHAGVEASLATSRMGCKTLLATINLDMLAFMPCNPSIGGSAKGIVVREIDALGGEMGKNIDKTYIQMKMLNTGKGPAVRALRAQADKSLYAREMKHTVEKQANLTLRQTMIDDILVEDGRVVGVLTATGQKFAAKAVVVTTGTALRGEIILGELKYSSGPNNSLASVTLADNLKKLGLEIGRFKTGTPPRVKASSINYDQTEIQPGDDKPNHFSFMSKDADYLKDQIPCWLTYTNQTSHDIINQNLYRAPMFSGIVKGVGPRYCPSIEDKIVRFADKERHQLFLEPEGRDTEEVYVQGLSTSLPEDVQKDLIHSIKGLEKAEMMRTGYAIEYDIVLPHQLRATLETKLISGLFTAGQTNGTSGYEEAAGQGLIAGINAALKVQGKPELILKRSDAYIGVMIDDLVTKGTLEPYRLLTSRAEYRLILRHDNADMRLTEIGRDIGLVDDERWKAFEIKKNQFDNELKRLNSIKLKPIKETNDRVQDLGFKPLTDAMTAKEFMRRPEIDYATAVSFVGPAAEDLDAKIIELLETEIKYEGYIRKALDQVAKMKRMEEKRIPTNIDWDAIDSIATEARQKFKKINPETIGQASRISGVNPADISILMIYLEGNGKAHRKY</sequence>
<protein>
    <recommendedName>
        <fullName evidence="1">tRNA uridine 5-carboxymethylaminomethyl modification enzyme MnmG</fullName>
    </recommendedName>
    <alternativeName>
        <fullName evidence="1">Glucose-inhibited division protein A</fullName>
    </alternativeName>
</protein>
<feature type="chain" id="PRO_0000117189" description="tRNA uridine 5-carboxymethylaminomethyl modification enzyme MnmG">
    <location>
        <begin position="1"/>
        <end position="632"/>
    </location>
</feature>
<feature type="binding site" evidence="1">
    <location>
        <begin position="15"/>
        <end position="20"/>
    </location>
    <ligand>
        <name>FAD</name>
        <dbReference type="ChEBI" id="CHEBI:57692"/>
    </ligand>
</feature>
<feature type="binding site" evidence="1">
    <location>
        <position position="127"/>
    </location>
    <ligand>
        <name>FAD</name>
        <dbReference type="ChEBI" id="CHEBI:57692"/>
    </ligand>
</feature>
<feature type="binding site" evidence="1">
    <location>
        <position position="182"/>
    </location>
    <ligand>
        <name>FAD</name>
        <dbReference type="ChEBI" id="CHEBI:57692"/>
    </ligand>
</feature>
<feature type="binding site" evidence="1">
    <location>
        <begin position="276"/>
        <end position="290"/>
    </location>
    <ligand>
        <name>NAD(+)</name>
        <dbReference type="ChEBI" id="CHEBI:57540"/>
    </ligand>
</feature>
<feature type="binding site" evidence="1">
    <location>
        <position position="373"/>
    </location>
    <ligand>
        <name>FAD</name>
        <dbReference type="ChEBI" id="CHEBI:57692"/>
    </ligand>
</feature>
<keyword id="KW-0963">Cytoplasm</keyword>
<keyword id="KW-0274">FAD</keyword>
<keyword id="KW-0285">Flavoprotein</keyword>
<keyword id="KW-0520">NAD</keyword>
<keyword id="KW-1185">Reference proteome</keyword>
<keyword id="KW-0819">tRNA processing</keyword>
<reference key="1">
    <citation type="journal article" date="2001" name="Proc. Natl. Acad. Sci. U.S.A.">
        <title>Complete genome sequence of an M1 strain of Streptococcus pyogenes.</title>
        <authorList>
            <person name="Ferretti J.J."/>
            <person name="McShan W.M."/>
            <person name="Ajdic D.J."/>
            <person name="Savic D.J."/>
            <person name="Savic G."/>
            <person name="Lyon K."/>
            <person name="Primeaux C."/>
            <person name="Sezate S."/>
            <person name="Suvorov A.N."/>
            <person name="Kenton S."/>
            <person name="Lai H.S."/>
            <person name="Lin S.P."/>
            <person name="Qian Y."/>
            <person name="Jia H.G."/>
            <person name="Najar F.Z."/>
            <person name="Ren Q."/>
            <person name="Zhu H."/>
            <person name="Song L."/>
            <person name="White J."/>
            <person name="Yuan X."/>
            <person name="Clifton S.W."/>
            <person name="Roe B.A."/>
            <person name="McLaughlin R.E."/>
        </authorList>
    </citation>
    <scope>NUCLEOTIDE SEQUENCE [LARGE SCALE GENOMIC DNA]</scope>
    <source>
        <strain>ATCC 700294 / SF370 / Serotype M1</strain>
    </source>
</reference>
<reference key="2">
    <citation type="journal article" date="2005" name="J. Infect. Dis.">
        <title>Evolutionary origin and emergence of a highly successful clone of serotype M1 group A Streptococcus involved multiple horizontal gene transfer events.</title>
        <authorList>
            <person name="Sumby P."/>
            <person name="Porcella S.F."/>
            <person name="Madrigal A.G."/>
            <person name="Barbian K.D."/>
            <person name="Virtaneva K."/>
            <person name="Ricklefs S.M."/>
            <person name="Sturdevant D.E."/>
            <person name="Graham M.R."/>
            <person name="Vuopio-Varkila J."/>
            <person name="Hoe N.P."/>
            <person name="Musser J.M."/>
        </authorList>
    </citation>
    <scope>NUCLEOTIDE SEQUENCE [LARGE SCALE GENOMIC DNA]</scope>
    <source>
        <strain>ATCC BAA-947 / MGAS5005 / Serotype M1</strain>
    </source>
</reference>
<organism>
    <name type="scientific">Streptococcus pyogenes serotype M1</name>
    <dbReference type="NCBI Taxonomy" id="301447"/>
    <lineage>
        <taxon>Bacteria</taxon>
        <taxon>Bacillati</taxon>
        <taxon>Bacillota</taxon>
        <taxon>Bacilli</taxon>
        <taxon>Lactobacillales</taxon>
        <taxon>Streptococcaceae</taxon>
        <taxon>Streptococcus</taxon>
    </lineage>
</organism>
<dbReference type="EMBL" id="AE004092">
    <property type="protein sequence ID" value="AAK34815.1"/>
    <property type="molecule type" value="Genomic_DNA"/>
</dbReference>
<dbReference type="EMBL" id="CP000017">
    <property type="protein sequence ID" value="AAZ52456.1"/>
    <property type="molecule type" value="Genomic_DNA"/>
</dbReference>
<dbReference type="RefSeq" id="NP_270094.1">
    <property type="nucleotide sequence ID" value="NC_002737.2"/>
</dbReference>
<dbReference type="SMR" id="Q99XI8"/>
<dbReference type="PaxDb" id="1314-HKU360_01948"/>
<dbReference type="KEGG" id="spy:SPy_2185"/>
<dbReference type="KEGG" id="spz:M5005_Spy1838"/>
<dbReference type="PATRIC" id="fig|160490.10.peg.1892"/>
<dbReference type="HOGENOM" id="CLU_007831_2_2_9"/>
<dbReference type="OMA" id="CNPAMGG"/>
<dbReference type="Proteomes" id="UP000000750">
    <property type="component" value="Chromosome"/>
</dbReference>
<dbReference type="GO" id="GO:0005829">
    <property type="term" value="C:cytosol"/>
    <property type="evidence" value="ECO:0007669"/>
    <property type="project" value="TreeGrafter"/>
</dbReference>
<dbReference type="GO" id="GO:0050660">
    <property type="term" value="F:flavin adenine dinucleotide binding"/>
    <property type="evidence" value="ECO:0007669"/>
    <property type="project" value="UniProtKB-UniRule"/>
</dbReference>
<dbReference type="GO" id="GO:0030488">
    <property type="term" value="P:tRNA methylation"/>
    <property type="evidence" value="ECO:0007669"/>
    <property type="project" value="TreeGrafter"/>
</dbReference>
<dbReference type="GO" id="GO:0002098">
    <property type="term" value="P:tRNA wobble uridine modification"/>
    <property type="evidence" value="ECO:0007669"/>
    <property type="project" value="InterPro"/>
</dbReference>
<dbReference type="FunFam" id="1.10.10.1800:FF:000001">
    <property type="entry name" value="tRNA uridine 5-carboxymethylaminomethyl modification enzyme MnmG"/>
    <property type="match status" value="1"/>
</dbReference>
<dbReference type="FunFam" id="1.10.150.570:FF:000001">
    <property type="entry name" value="tRNA uridine 5-carboxymethylaminomethyl modification enzyme MnmG"/>
    <property type="match status" value="1"/>
</dbReference>
<dbReference type="FunFam" id="3.50.50.60:FF:000002">
    <property type="entry name" value="tRNA uridine 5-carboxymethylaminomethyl modification enzyme MnmG"/>
    <property type="match status" value="1"/>
</dbReference>
<dbReference type="FunFam" id="3.50.50.60:FF:000063">
    <property type="entry name" value="tRNA uridine 5-carboxymethylaminomethyl modification enzyme MnmG"/>
    <property type="match status" value="1"/>
</dbReference>
<dbReference type="Gene3D" id="3.50.50.60">
    <property type="entry name" value="FAD/NAD(P)-binding domain"/>
    <property type="match status" value="2"/>
</dbReference>
<dbReference type="Gene3D" id="1.10.150.570">
    <property type="entry name" value="GidA associated domain, C-terminal subdomain"/>
    <property type="match status" value="1"/>
</dbReference>
<dbReference type="Gene3D" id="1.10.10.1800">
    <property type="entry name" value="tRNA uridine 5-carboxymethylaminomethyl modification enzyme MnmG/GidA"/>
    <property type="match status" value="1"/>
</dbReference>
<dbReference type="HAMAP" id="MF_00129">
    <property type="entry name" value="MnmG_GidA"/>
    <property type="match status" value="1"/>
</dbReference>
<dbReference type="InterPro" id="IPR036188">
    <property type="entry name" value="FAD/NAD-bd_sf"/>
</dbReference>
<dbReference type="InterPro" id="IPR049312">
    <property type="entry name" value="GIDA_C_N"/>
</dbReference>
<dbReference type="InterPro" id="IPR004416">
    <property type="entry name" value="MnmG"/>
</dbReference>
<dbReference type="InterPro" id="IPR002218">
    <property type="entry name" value="MnmG-rel"/>
</dbReference>
<dbReference type="InterPro" id="IPR020595">
    <property type="entry name" value="MnmG-rel_CS"/>
</dbReference>
<dbReference type="InterPro" id="IPR026904">
    <property type="entry name" value="MnmG_C"/>
</dbReference>
<dbReference type="InterPro" id="IPR047001">
    <property type="entry name" value="MnmG_C_subdom"/>
</dbReference>
<dbReference type="InterPro" id="IPR044920">
    <property type="entry name" value="MnmG_C_subdom_sf"/>
</dbReference>
<dbReference type="InterPro" id="IPR040131">
    <property type="entry name" value="MnmG_N"/>
</dbReference>
<dbReference type="NCBIfam" id="TIGR00136">
    <property type="entry name" value="mnmG_gidA"/>
    <property type="match status" value="1"/>
</dbReference>
<dbReference type="PANTHER" id="PTHR11806">
    <property type="entry name" value="GLUCOSE INHIBITED DIVISION PROTEIN A"/>
    <property type="match status" value="1"/>
</dbReference>
<dbReference type="PANTHER" id="PTHR11806:SF0">
    <property type="entry name" value="PROTEIN MTO1 HOMOLOG, MITOCHONDRIAL"/>
    <property type="match status" value="1"/>
</dbReference>
<dbReference type="Pfam" id="PF01134">
    <property type="entry name" value="GIDA"/>
    <property type="match status" value="1"/>
</dbReference>
<dbReference type="Pfam" id="PF21680">
    <property type="entry name" value="GIDA_C_1st"/>
    <property type="match status" value="1"/>
</dbReference>
<dbReference type="Pfam" id="PF13932">
    <property type="entry name" value="SAM_GIDA_C"/>
    <property type="match status" value="1"/>
</dbReference>
<dbReference type="PRINTS" id="PR00411">
    <property type="entry name" value="PNDRDTASEI"/>
</dbReference>
<dbReference type="SMART" id="SM01228">
    <property type="entry name" value="GIDA_assoc_3"/>
    <property type="match status" value="1"/>
</dbReference>
<dbReference type="SUPFAM" id="SSF51905">
    <property type="entry name" value="FAD/NAD(P)-binding domain"/>
    <property type="match status" value="1"/>
</dbReference>
<dbReference type="PROSITE" id="PS01280">
    <property type="entry name" value="GIDA_1"/>
    <property type="match status" value="1"/>
</dbReference>
<dbReference type="PROSITE" id="PS01281">
    <property type="entry name" value="GIDA_2"/>
    <property type="match status" value="1"/>
</dbReference>